<name>YPFN_ECOBW</name>
<sequence length="66" mass="8071">MDWLAKYWWILVIVFLVGVLLNVIKDLKRVDHKKFLANKPELPPHRDFNDKWDDDDDWPKKDQPKK</sequence>
<keyword id="KW-1003">Cell membrane</keyword>
<keyword id="KW-0472">Membrane</keyword>
<keyword id="KW-0812">Transmembrane</keyword>
<keyword id="KW-1133">Transmembrane helix</keyword>
<reference key="1">
    <citation type="journal article" date="2009" name="J. Bacteriol.">
        <title>Genomic sequencing reveals regulatory mutations and recombinational events in the widely used MC4100 lineage of Escherichia coli K-12.</title>
        <authorList>
            <person name="Ferenci T."/>
            <person name="Zhou Z."/>
            <person name="Betteridge T."/>
            <person name="Ren Y."/>
            <person name="Liu Y."/>
            <person name="Feng L."/>
            <person name="Reeves P.R."/>
            <person name="Wang L."/>
        </authorList>
    </citation>
    <scope>NUCLEOTIDE SEQUENCE [LARGE SCALE GENOMIC DNA]</scope>
    <source>
        <strain>K12 / MC4100 / BW2952</strain>
    </source>
</reference>
<organism>
    <name type="scientific">Escherichia coli (strain K12 / MC4100 / BW2952)</name>
    <dbReference type="NCBI Taxonomy" id="595496"/>
    <lineage>
        <taxon>Bacteria</taxon>
        <taxon>Pseudomonadati</taxon>
        <taxon>Pseudomonadota</taxon>
        <taxon>Gammaproteobacteria</taxon>
        <taxon>Enterobacterales</taxon>
        <taxon>Enterobacteriaceae</taxon>
        <taxon>Escherichia</taxon>
    </lineage>
</organism>
<accession>C4ZX47</accession>
<comment type="subcellular location">
    <subcellularLocation>
        <location evidence="1">Cell membrane</location>
        <topology evidence="1">Single-pass membrane protein</topology>
    </subcellularLocation>
</comment>
<comment type="similarity">
    <text evidence="1">Belongs to the UPF0370 family.</text>
</comment>
<dbReference type="EMBL" id="CP001396">
    <property type="protein sequence ID" value="ACR65043.1"/>
    <property type="molecule type" value="Genomic_DNA"/>
</dbReference>
<dbReference type="RefSeq" id="WP_000383836.1">
    <property type="nucleotide sequence ID" value="NC_012759.1"/>
</dbReference>
<dbReference type="SMR" id="C4ZX47"/>
<dbReference type="KEGG" id="ebw:BWG_2236"/>
<dbReference type="HOGENOM" id="CLU_198936_0_0_6"/>
<dbReference type="GO" id="GO:0005886">
    <property type="term" value="C:plasma membrane"/>
    <property type="evidence" value="ECO:0007669"/>
    <property type="project" value="UniProtKB-SubCell"/>
</dbReference>
<dbReference type="HAMAP" id="MF_01566">
    <property type="entry name" value="UPF0370"/>
    <property type="match status" value="1"/>
</dbReference>
<dbReference type="InterPro" id="IPR020910">
    <property type="entry name" value="UPF0370"/>
</dbReference>
<dbReference type="NCBIfam" id="NF010185">
    <property type="entry name" value="PRK13664.1"/>
    <property type="match status" value="1"/>
</dbReference>
<dbReference type="Pfam" id="PF13980">
    <property type="entry name" value="UPF0370"/>
    <property type="match status" value="1"/>
</dbReference>
<proteinExistence type="inferred from homology"/>
<evidence type="ECO:0000255" key="1">
    <source>
        <dbReference type="HAMAP-Rule" id="MF_01566"/>
    </source>
</evidence>
<evidence type="ECO:0000256" key="2">
    <source>
        <dbReference type="SAM" id="MobiDB-lite"/>
    </source>
</evidence>
<feature type="chain" id="PRO_1000215517" description="UPF0370 protein YpfN">
    <location>
        <begin position="1"/>
        <end position="66"/>
    </location>
</feature>
<feature type="transmembrane region" description="Helical" evidence="1">
    <location>
        <begin position="4"/>
        <end position="24"/>
    </location>
</feature>
<feature type="region of interest" description="Disordered" evidence="2">
    <location>
        <begin position="39"/>
        <end position="66"/>
    </location>
</feature>
<feature type="compositionally biased region" description="Basic and acidic residues" evidence="2">
    <location>
        <begin position="42"/>
        <end position="51"/>
    </location>
</feature>
<protein>
    <recommendedName>
        <fullName evidence="1">UPF0370 protein YpfN</fullName>
    </recommendedName>
</protein>
<gene>
    <name evidence="1" type="primary">ypfN</name>
    <name type="ordered locus">BWG_2236</name>
</gene>